<proteinExistence type="inferred from homology"/>
<keyword id="KW-0131">Cell cycle</keyword>
<keyword id="KW-0132">Cell division</keyword>
<accession>A8G2Y1</accession>
<feature type="chain" id="PRO_1000078641" description="Cell division topological specificity factor">
    <location>
        <begin position="1"/>
        <end position="108"/>
    </location>
</feature>
<comment type="function">
    <text evidence="1">Prevents the cell division inhibition by proteins MinC and MinD at internal division sites while permitting inhibition at polar sites. This ensures cell division at the proper site by restricting the formation of a division septum at the midpoint of the long axis of the cell.</text>
</comment>
<comment type="similarity">
    <text evidence="1">Belongs to the MinE family.</text>
</comment>
<dbReference type="EMBL" id="CP000825">
    <property type="protein sequence ID" value="ABV49962.1"/>
    <property type="molecule type" value="Genomic_DNA"/>
</dbReference>
<dbReference type="RefSeq" id="WP_002806062.1">
    <property type="nucleotide sequence ID" value="NC_009840.1"/>
</dbReference>
<dbReference type="SMR" id="A8G2Y1"/>
<dbReference type="STRING" id="93060.P9215_03451"/>
<dbReference type="KEGG" id="pmh:P9215_03451"/>
<dbReference type="eggNOG" id="COG0851">
    <property type="taxonomic scope" value="Bacteria"/>
</dbReference>
<dbReference type="HOGENOM" id="CLU_137929_1_1_3"/>
<dbReference type="Proteomes" id="UP000002014">
    <property type="component" value="Chromosome"/>
</dbReference>
<dbReference type="GO" id="GO:0051301">
    <property type="term" value="P:cell division"/>
    <property type="evidence" value="ECO:0007669"/>
    <property type="project" value="UniProtKB-KW"/>
</dbReference>
<dbReference type="GO" id="GO:0032955">
    <property type="term" value="P:regulation of division septum assembly"/>
    <property type="evidence" value="ECO:0007669"/>
    <property type="project" value="InterPro"/>
</dbReference>
<dbReference type="Gene3D" id="3.30.1070.10">
    <property type="entry name" value="Cell division topological specificity factor MinE"/>
    <property type="match status" value="1"/>
</dbReference>
<dbReference type="HAMAP" id="MF_00262">
    <property type="entry name" value="MinE"/>
    <property type="match status" value="1"/>
</dbReference>
<dbReference type="InterPro" id="IPR005527">
    <property type="entry name" value="MinE"/>
</dbReference>
<dbReference type="InterPro" id="IPR036707">
    <property type="entry name" value="MinE_sf"/>
</dbReference>
<dbReference type="NCBIfam" id="TIGR01215">
    <property type="entry name" value="minE"/>
    <property type="match status" value="1"/>
</dbReference>
<dbReference type="NCBIfam" id="NF001422">
    <property type="entry name" value="PRK00296.1"/>
    <property type="match status" value="1"/>
</dbReference>
<dbReference type="Pfam" id="PF03776">
    <property type="entry name" value="MinE"/>
    <property type="match status" value="1"/>
</dbReference>
<dbReference type="SUPFAM" id="SSF55229">
    <property type="entry name" value="Cell division protein MinE topological specificity domain"/>
    <property type="match status" value="1"/>
</dbReference>
<evidence type="ECO:0000255" key="1">
    <source>
        <dbReference type="HAMAP-Rule" id="MF_00262"/>
    </source>
</evidence>
<name>MINE_PROM2</name>
<reference key="1">
    <citation type="journal article" date="2007" name="PLoS Genet.">
        <title>Patterns and implications of gene gain and loss in the evolution of Prochlorococcus.</title>
        <authorList>
            <person name="Kettler G.C."/>
            <person name="Martiny A.C."/>
            <person name="Huang K."/>
            <person name="Zucker J."/>
            <person name="Coleman M.L."/>
            <person name="Rodrigue S."/>
            <person name="Chen F."/>
            <person name="Lapidus A."/>
            <person name="Ferriera S."/>
            <person name="Johnson J."/>
            <person name="Steglich C."/>
            <person name="Church G.M."/>
            <person name="Richardson P."/>
            <person name="Chisholm S.W."/>
        </authorList>
    </citation>
    <scope>NUCLEOTIDE SEQUENCE [LARGE SCALE GENOMIC DNA]</scope>
    <source>
        <strain>MIT 9215</strain>
    </source>
</reference>
<protein>
    <recommendedName>
        <fullName evidence="1">Cell division topological specificity factor</fullName>
    </recommendedName>
</protein>
<sequence>MMTLRDLINKLLGRETSSANTARERLQLVLAHDRVDMSSLTTDLLDKMRKEILDVVAKYVEIDFEEVAVSLETEDRMTALVANLPIKRTISGEIKFKKTDKANKDIKK</sequence>
<organism>
    <name type="scientific">Prochlorococcus marinus (strain MIT 9215)</name>
    <dbReference type="NCBI Taxonomy" id="93060"/>
    <lineage>
        <taxon>Bacteria</taxon>
        <taxon>Bacillati</taxon>
        <taxon>Cyanobacteriota</taxon>
        <taxon>Cyanophyceae</taxon>
        <taxon>Synechococcales</taxon>
        <taxon>Prochlorococcaceae</taxon>
        <taxon>Prochlorococcus</taxon>
    </lineage>
</organism>
<gene>
    <name evidence="1" type="primary">minE</name>
    <name type="ordered locus">P9215_03451</name>
</gene>